<dbReference type="EMBL" id="L28175">
    <property type="protein sequence ID" value="AAA36434.1"/>
    <property type="molecule type" value="mRNA"/>
</dbReference>
<dbReference type="EMBL" id="L25124">
    <property type="protein sequence ID" value="AAA36438.1"/>
    <property type="molecule type" value="mRNA"/>
</dbReference>
<dbReference type="EMBL" id="X97873">
    <property type="protein sequence ID" value="CAA66463.1"/>
    <property type="molecule type" value="Genomic_DNA"/>
</dbReference>
<dbReference type="EMBL" id="X97874">
    <property type="protein sequence ID" value="CAA66463.1"/>
    <property type="status" value="JOINED"/>
    <property type="molecule type" value="Genomic_DNA"/>
</dbReference>
<dbReference type="EMBL" id="D28472">
    <property type="protein sequence ID" value="BAA05834.1"/>
    <property type="molecule type" value="mRNA"/>
</dbReference>
<dbReference type="EMBL" id="AY429109">
    <property type="protein sequence ID" value="AAR07904.1"/>
    <property type="molecule type" value="mRNA"/>
</dbReference>
<dbReference type="EMBL" id="DQ400918">
    <property type="protein sequence ID" value="ABD48960.1"/>
    <property type="molecule type" value="Genomic_DNA"/>
</dbReference>
<dbReference type="EMBL" id="BC101534">
    <property type="protein sequence ID" value="AAI01535.1"/>
    <property type="molecule type" value="mRNA"/>
</dbReference>
<dbReference type="EMBL" id="BC113523">
    <property type="protein sequence ID" value="AAI13524.1"/>
    <property type="molecule type" value="mRNA"/>
</dbReference>
<dbReference type="CCDS" id="CCDS3930.1"/>
<dbReference type="PIR" id="A53572">
    <property type="entry name" value="A53572"/>
</dbReference>
<dbReference type="RefSeq" id="NP_000949.1">
    <property type="nucleotide sequence ID" value="NM_000958.3"/>
</dbReference>
<dbReference type="PDB" id="5YHL">
    <property type="method" value="X-ray"/>
    <property type="resolution" value="4.20 A"/>
    <property type="chains" value="A=4-366"/>
</dbReference>
<dbReference type="PDB" id="5YWY">
    <property type="method" value="X-ray"/>
    <property type="resolution" value="3.20 A"/>
    <property type="chains" value="A=4-366"/>
</dbReference>
<dbReference type="PDB" id="7D7M">
    <property type="method" value="EM"/>
    <property type="resolution" value="3.30 A"/>
    <property type="chains" value="A=4-366"/>
</dbReference>
<dbReference type="PDB" id="8GCM">
    <property type="method" value="EM"/>
    <property type="resolution" value="3.50 A"/>
    <property type="chains" value="R=1-488"/>
</dbReference>
<dbReference type="PDB" id="8GCP">
    <property type="method" value="EM"/>
    <property type="resolution" value="3.10 A"/>
    <property type="chains" value="R=1-488"/>
</dbReference>
<dbReference type="PDB" id="8GD9">
    <property type="method" value="EM"/>
    <property type="resolution" value="3.20 A"/>
    <property type="chains" value="R=1-488"/>
</dbReference>
<dbReference type="PDB" id="8GDA">
    <property type="method" value="EM"/>
    <property type="resolution" value="3.30 A"/>
    <property type="chains" value="R=1-488"/>
</dbReference>
<dbReference type="PDB" id="8GDB">
    <property type="method" value="EM"/>
    <property type="resolution" value="3.10 A"/>
    <property type="chains" value="R=1-488"/>
</dbReference>
<dbReference type="PDBsum" id="5YHL"/>
<dbReference type="PDBsum" id="5YWY"/>
<dbReference type="PDBsum" id="7D7M"/>
<dbReference type="PDBsum" id="8GCM"/>
<dbReference type="PDBsum" id="8GCP"/>
<dbReference type="PDBsum" id="8GD9"/>
<dbReference type="PDBsum" id="8GDA"/>
<dbReference type="PDBsum" id="8GDB"/>
<dbReference type="EMDB" id="EMD-29935"/>
<dbReference type="EMDB" id="EMD-29940"/>
<dbReference type="EMDB" id="EMD-29943"/>
<dbReference type="EMDB" id="EMD-29944"/>
<dbReference type="EMDB" id="EMD-29945"/>
<dbReference type="EMDB" id="EMD-30608"/>
<dbReference type="SMR" id="P35408"/>
<dbReference type="BioGRID" id="111706">
    <property type="interactions" value="47"/>
</dbReference>
<dbReference type="CORUM" id="P35408"/>
<dbReference type="DIP" id="DIP-61099N"/>
<dbReference type="FunCoup" id="P35408">
    <property type="interactions" value="1431"/>
</dbReference>
<dbReference type="IntAct" id="P35408">
    <property type="interactions" value="43"/>
</dbReference>
<dbReference type="MINT" id="P35408"/>
<dbReference type="STRING" id="9606.ENSP00000302846"/>
<dbReference type="BindingDB" id="P35408"/>
<dbReference type="ChEMBL" id="CHEMBL1836"/>
<dbReference type="DrugBank" id="DB00770">
    <property type="generic name" value="Alprostadil"/>
</dbReference>
<dbReference type="DrugBank" id="DB11113">
    <property type="generic name" value="Castor oil"/>
</dbReference>
<dbReference type="DrugBank" id="DB12789">
    <property type="generic name" value="Dinoprost"/>
</dbReference>
<dbReference type="DrugBank" id="DB00917">
    <property type="generic name" value="Dinoprostone"/>
</dbReference>
<dbReference type="DrugBank" id="DB12836">
    <property type="generic name" value="Grapiprant"/>
</dbReference>
<dbReference type="DrugBank" id="DB09211">
    <property type="generic name" value="Limaprost"/>
</dbReference>
<dbReference type="DrugBank" id="DB00929">
    <property type="generic name" value="Misoprostol"/>
</dbReference>
<dbReference type="DrugBank" id="DB02056">
    <property type="generic name" value="Prostaglandin D2"/>
</dbReference>
<dbReference type="DrugBank" id="DB16315">
    <property type="generic name" value="Rivenprost"/>
</dbReference>
<dbReference type="DrugBank" id="DB04297">
    <property type="generic name" value="Trichostatin A"/>
</dbReference>
<dbReference type="DrugCentral" id="P35408"/>
<dbReference type="GuidetoPHARMACOLOGY" id="343"/>
<dbReference type="GlyCosmos" id="P35408">
    <property type="glycosylation" value="1 site, No reported glycans"/>
</dbReference>
<dbReference type="GlyGen" id="P35408">
    <property type="glycosylation" value="1 site"/>
</dbReference>
<dbReference type="iPTMnet" id="P35408"/>
<dbReference type="PhosphoSitePlus" id="P35408"/>
<dbReference type="BioMuta" id="PTGER4"/>
<dbReference type="DMDM" id="548476"/>
<dbReference type="jPOST" id="P35408"/>
<dbReference type="MassIVE" id="P35408"/>
<dbReference type="PaxDb" id="9606-ENSP00000302846"/>
<dbReference type="PeptideAtlas" id="P35408"/>
<dbReference type="ProteomicsDB" id="55059"/>
<dbReference type="ABCD" id="P35408">
    <property type="antibodies" value="2 sequenced antibodies"/>
</dbReference>
<dbReference type="Antibodypedia" id="2762">
    <property type="antibodies" value="371 antibodies from 35 providers"/>
</dbReference>
<dbReference type="DNASU" id="5734"/>
<dbReference type="Ensembl" id="ENST00000302472.4">
    <property type="protein sequence ID" value="ENSP00000302846.3"/>
    <property type="gene ID" value="ENSG00000171522.6"/>
</dbReference>
<dbReference type="GeneID" id="5734"/>
<dbReference type="KEGG" id="hsa:5734"/>
<dbReference type="MANE-Select" id="ENST00000302472.4">
    <property type="protein sequence ID" value="ENSP00000302846.3"/>
    <property type="RefSeq nucleotide sequence ID" value="NM_000958.3"/>
    <property type="RefSeq protein sequence ID" value="NP_000949.1"/>
</dbReference>
<dbReference type="UCSC" id="uc003jlz.5">
    <property type="organism name" value="human"/>
</dbReference>
<dbReference type="AGR" id="HGNC:9596"/>
<dbReference type="CTD" id="5734"/>
<dbReference type="DisGeNET" id="5734"/>
<dbReference type="GeneCards" id="PTGER4"/>
<dbReference type="HGNC" id="HGNC:9596">
    <property type="gene designation" value="PTGER4"/>
</dbReference>
<dbReference type="HPA" id="ENSG00000171522">
    <property type="expression patterns" value="Tissue enhanced (bone marrow, pancreas)"/>
</dbReference>
<dbReference type="MIM" id="601586">
    <property type="type" value="gene"/>
</dbReference>
<dbReference type="neXtProt" id="NX_P35408"/>
<dbReference type="OpenTargets" id="ENSG00000171522"/>
<dbReference type="PharmGKB" id="PA289"/>
<dbReference type="VEuPathDB" id="HostDB:ENSG00000171522"/>
<dbReference type="eggNOG" id="KOG3656">
    <property type="taxonomic scope" value="Eukaryota"/>
</dbReference>
<dbReference type="GeneTree" id="ENSGT01050000244902"/>
<dbReference type="HOGENOM" id="CLU_045991_0_2_1"/>
<dbReference type="InParanoid" id="P35408"/>
<dbReference type="OMA" id="VGHVVWR"/>
<dbReference type="OrthoDB" id="5959154at2759"/>
<dbReference type="PAN-GO" id="P35408">
    <property type="GO annotations" value="7 GO annotations based on evolutionary models"/>
</dbReference>
<dbReference type="PhylomeDB" id="P35408"/>
<dbReference type="TreeFam" id="TF324982"/>
<dbReference type="PathwayCommons" id="P35408"/>
<dbReference type="Reactome" id="R-HSA-391908">
    <property type="pathway name" value="Prostanoid ligand receptors"/>
</dbReference>
<dbReference type="Reactome" id="R-HSA-418555">
    <property type="pathway name" value="G alpha (s) signalling events"/>
</dbReference>
<dbReference type="SABIO-RK" id="P35408"/>
<dbReference type="SignaLink" id="P35408"/>
<dbReference type="SIGNOR" id="P35408"/>
<dbReference type="BioGRID-ORCS" id="5734">
    <property type="hits" value="12 hits in 1164 CRISPR screens"/>
</dbReference>
<dbReference type="ChiTaRS" id="PTGER4">
    <property type="organism name" value="human"/>
</dbReference>
<dbReference type="GeneWiki" id="EP4_receptor"/>
<dbReference type="GenomeRNAi" id="5734"/>
<dbReference type="Pharos" id="P35408">
    <property type="development level" value="Tclin"/>
</dbReference>
<dbReference type="PRO" id="PR:P35408"/>
<dbReference type="Proteomes" id="UP000005640">
    <property type="component" value="Chromosome 5"/>
</dbReference>
<dbReference type="RNAct" id="P35408">
    <property type="molecule type" value="protein"/>
</dbReference>
<dbReference type="Bgee" id="ENSG00000171522">
    <property type="expression patterns" value="Expressed in palpebral conjunctiva and 194 other cell types or tissues"/>
</dbReference>
<dbReference type="GO" id="GO:0016020">
    <property type="term" value="C:membrane"/>
    <property type="evidence" value="ECO:0000303"/>
    <property type="project" value="UniProtKB"/>
</dbReference>
<dbReference type="GO" id="GO:0005886">
    <property type="term" value="C:plasma membrane"/>
    <property type="evidence" value="ECO:0000314"/>
    <property type="project" value="UniProt"/>
</dbReference>
<dbReference type="GO" id="GO:0004957">
    <property type="term" value="F:prostaglandin E receptor activity"/>
    <property type="evidence" value="ECO:0000314"/>
    <property type="project" value="UniProtKB"/>
</dbReference>
<dbReference type="GO" id="GO:0007189">
    <property type="term" value="P:adenylate cyclase-activating G protein-coupled receptor signaling pathway"/>
    <property type="evidence" value="ECO:0000314"/>
    <property type="project" value="UniProt"/>
</dbReference>
<dbReference type="GO" id="GO:0007193">
    <property type="term" value="P:adenylate cyclase-inhibiting G protein-coupled receptor signaling pathway"/>
    <property type="evidence" value="ECO:0000314"/>
    <property type="project" value="UniProt"/>
</dbReference>
<dbReference type="GO" id="GO:0007188">
    <property type="term" value="P:adenylate cyclase-modulating G protein-coupled receptor signaling pathway"/>
    <property type="evidence" value="ECO:0000314"/>
    <property type="project" value="UniProtKB"/>
</dbReference>
<dbReference type="GO" id="GO:0060348">
    <property type="term" value="P:bone development"/>
    <property type="evidence" value="ECO:0000250"/>
    <property type="project" value="UniProtKB"/>
</dbReference>
<dbReference type="GO" id="GO:0071260">
    <property type="term" value="P:cellular response to mechanical stimulus"/>
    <property type="evidence" value="ECO:0000250"/>
    <property type="project" value="UniProtKB"/>
</dbReference>
<dbReference type="GO" id="GO:0071380">
    <property type="term" value="P:cellular response to prostaglandin E stimulus"/>
    <property type="evidence" value="ECO:0000318"/>
    <property type="project" value="GO_Central"/>
</dbReference>
<dbReference type="GO" id="GO:0070371">
    <property type="term" value="P:ERK1 and ERK2 cascade"/>
    <property type="evidence" value="ECO:0000250"/>
    <property type="project" value="UniProtKB"/>
</dbReference>
<dbReference type="GO" id="GO:0006955">
    <property type="term" value="P:immune response"/>
    <property type="evidence" value="ECO:0000270"/>
    <property type="project" value="UniProtKB"/>
</dbReference>
<dbReference type="GO" id="GO:0006954">
    <property type="term" value="P:inflammatory response"/>
    <property type="evidence" value="ECO:0000318"/>
    <property type="project" value="GO_Central"/>
</dbReference>
<dbReference type="GO" id="GO:0007254">
    <property type="term" value="P:JNK cascade"/>
    <property type="evidence" value="ECO:0000250"/>
    <property type="project" value="UniProtKB"/>
</dbReference>
<dbReference type="GO" id="GO:0001818">
    <property type="term" value="P:negative regulation of cytokine production"/>
    <property type="evidence" value="ECO:0000250"/>
    <property type="project" value="UniProtKB"/>
</dbReference>
<dbReference type="GO" id="GO:2000420">
    <property type="term" value="P:negative regulation of eosinophil extravasation"/>
    <property type="evidence" value="ECO:0000314"/>
    <property type="project" value="UniProtKB"/>
</dbReference>
<dbReference type="GO" id="GO:0050728">
    <property type="term" value="P:negative regulation of inflammatory response"/>
    <property type="evidence" value="ECO:0000314"/>
    <property type="project" value="UniProtKB"/>
</dbReference>
<dbReference type="GO" id="GO:0033624">
    <property type="term" value="P:negative regulation of integrin activation"/>
    <property type="evidence" value="ECO:0000314"/>
    <property type="project" value="UniProtKB"/>
</dbReference>
<dbReference type="GO" id="GO:0001819">
    <property type="term" value="P:positive regulation of cytokine production"/>
    <property type="evidence" value="ECO:0000250"/>
    <property type="project" value="UniProtKB"/>
</dbReference>
<dbReference type="GO" id="GO:0007204">
    <property type="term" value="P:positive regulation of cytosolic calcium ion concentration"/>
    <property type="evidence" value="ECO:0000318"/>
    <property type="project" value="GO_Central"/>
</dbReference>
<dbReference type="GO" id="GO:0050729">
    <property type="term" value="P:positive regulation of inflammatory response"/>
    <property type="evidence" value="ECO:0000250"/>
    <property type="project" value="UniProtKB"/>
</dbReference>
<dbReference type="GO" id="GO:0051492">
    <property type="term" value="P:regulation of stress fiber assembly"/>
    <property type="evidence" value="ECO:0000250"/>
    <property type="project" value="UniProtKB"/>
</dbReference>
<dbReference type="GO" id="GO:0009612">
    <property type="term" value="P:response to mechanical stimulus"/>
    <property type="evidence" value="ECO:0000270"/>
    <property type="project" value="UniProtKB"/>
</dbReference>
<dbReference type="GO" id="GO:0034695">
    <property type="term" value="P:response to prostaglandin E"/>
    <property type="evidence" value="ECO:0000314"/>
    <property type="project" value="UniProt"/>
</dbReference>
<dbReference type="GO" id="GO:0042093">
    <property type="term" value="P:T-helper cell differentiation"/>
    <property type="evidence" value="ECO:0000250"/>
    <property type="project" value="UniProtKB"/>
</dbReference>
<dbReference type="CDD" id="cd15142">
    <property type="entry name" value="7tmA_PGE2_EP4"/>
    <property type="match status" value="1"/>
</dbReference>
<dbReference type="FunFam" id="1.20.1070.10:FF:000101">
    <property type="entry name" value="Prostaglandin E2 receptor EP4 subtype"/>
    <property type="match status" value="1"/>
</dbReference>
<dbReference type="Gene3D" id="1.20.1070.10">
    <property type="entry name" value="Rhodopsin 7-helix transmembrane proteins"/>
    <property type="match status" value="1"/>
</dbReference>
<dbReference type="InterPro" id="IPR000276">
    <property type="entry name" value="GPCR_Rhodpsn"/>
</dbReference>
<dbReference type="InterPro" id="IPR017452">
    <property type="entry name" value="GPCR_Rhodpsn_7TM"/>
</dbReference>
<dbReference type="InterPro" id="IPR001758">
    <property type="entry name" value="Prost_EP4_rcpt"/>
</dbReference>
<dbReference type="InterPro" id="IPR008365">
    <property type="entry name" value="Prostanoid_rcpt"/>
</dbReference>
<dbReference type="InterPro" id="IPR001244">
    <property type="entry name" value="Prostglndn_DP_rcpt"/>
</dbReference>
<dbReference type="PANTHER" id="PTHR11866">
    <property type="entry name" value="G-PROTEIN COUPLED RECEPTOR FAMILY 1 MEMBER"/>
    <property type="match status" value="1"/>
</dbReference>
<dbReference type="PANTHER" id="PTHR11866:SF6">
    <property type="entry name" value="PROSTAGLANDIN E2 RECEPTOR EP4 SUBTYPE"/>
    <property type="match status" value="1"/>
</dbReference>
<dbReference type="Pfam" id="PF00001">
    <property type="entry name" value="7tm_1"/>
    <property type="match status" value="1"/>
</dbReference>
<dbReference type="PRINTS" id="PR00237">
    <property type="entry name" value="GPCRRHODOPSN"/>
</dbReference>
<dbReference type="PRINTS" id="PR00428">
    <property type="entry name" value="PROSTAGLNDNR"/>
</dbReference>
<dbReference type="PRINTS" id="PR01788">
    <property type="entry name" value="PROSTANOIDR"/>
</dbReference>
<dbReference type="PRINTS" id="PR00586">
    <property type="entry name" value="PRSTNOIDEP4R"/>
</dbReference>
<dbReference type="SUPFAM" id="SSF81321">
    <property type="entry name" value="Family A G protein-coupled receptor-like"/>
    <property type="match status" value="1"/>
</dbReference>
<dbReference type="PROSITE" id="PS00237">
    <property type="entry name" value="G_PROTEIN_RECEP_F1_1"/>
    <property type="match status" value="1"/>
</dbReference>
<dbReference type="PROSITE" id="PS50262">
    <property type="entry name" value="G_PROTEIN_RECEP_F1_2"/>
    <property type="match status" value="1"/>
</dbReference>
<accession>P35408</accession>
<accession>Q3MJ87</accession>
<protein>
    <recommendedName>
        <fullName>Prostaglandin E2 receptor EP4 subtype</fullName>
        <shortName>PGE receptor EP4 subtype</shortName>
        <shortName>PGE2 receptor EP4 subtype</shortName>
    </recommendedName>
    <alternativeName>
        <fullName>Prostanoid EP4 receptor</fullName>
    </alternativeName>
</protein>
<sequence length="488" mass="53119">MSTPGVNSSASLSPDRLNSPVTIPAVMFIFGVVGNLVAIVVLCKSRKEQKETTFYTLVCGLAVTDLLGTLLVSPVTIATYMKGQWPGGQPLCEYSTFILLFFSLSGLSIICAMSVERYLAINHAYFYSHYVDKRLAGLTLFAVYASNVLFCALPNMGLGSSRLQYPDTWCFIDWTTNVTAHAAYSYMYAGFSSFLILATVLCNVLVCGALLRMHRQFMRRTSLGTEQHHAAAAASVASRGHPAASPALPRLSDFRRRRSFRRIAGAEIQMVILLIATSLVVLICSIPLVVRVFVNQLYQPSLEREVSKNPDLQAIRIASVNPILDPWIYILLRKTVLSKAIEKIKCLFCRIGGSRRERSGQHCSDSQRTSSAMSGHSRSFISRELKEISSTSQTLLPDLSLPDLSENGLGGRNLLPGVPGMGLAQEDTTSLRTLRISETSDSSQGQDSESVLLVDEAGGSGRAGPAPKGSSLQVTFPSETLNLSEKCI</sequence>
<keyword id="KW-0002">3D-structure</keyword>
<keyword id="KW-1003">Cell membrane</keyword>
<keyword id="KW-1015">Disulfide bond</keyword>
<keyword id="KW-0297">G-protein coupled receptor</keyword>
<keyword id="KW-0325">Glycoprotein</keyword>
<keyword id="KW-0472">Membrane</keyword>
<keyword id="KW-0597">Phosphoprotein</keyword>
<keyword id="KW-1267">Proteomics identification</keyword>
<keyword id="KW-0675">Receptor</keyword>
<keyword id="KW-1185">Reference proteome</keyword>
<keyword id="KW-0807">Transducer</keyword>
<keyword id="KW-0812">Transmembrane</keyword>
<keyword id="KW-1133">Transmembrane helix</keyword>
<feature type="chain" id="PRO_0000070064" description="Prostaglandin E2 receptor EP4 subtype">
    <location>
        <begin position="1"/>
        <end position="488"/>
    </location>
</feature>
<feature type="topological domain" description="Extracellular" evidence="1">
    <location>
        <begin position="1"/>
        <end position="19"/>
    </location>
</feature>
<feature type="transmembrane region" description="Helical; Name=1" evidence="1">
    <location>
        <begin position="20"/>
        <end position="43"/>
    </location>
</feature>
<feature type="topological domain" description="Cytoplasmic" evidence="1">
    <location>
        <begin position="44"/>
        <end position="55"/>
    </location>
</feature>
<feature type="transmembrane region" description="Helical; Name=2" evidence="1">
    <location>
        <begin position="56"/>
        <end position="79"/>
    </location>
</feature>
<feature type="topological domain" description="Extracellular" evidence="1">
    <location>
        <begin position="80"/>
        <end position="96"/>
    </location>
</feature>
<feature type="transmembrane region" description="Helical; Name=3" evidence="1">
    <location>
        <begin position="97"/>
        <end position="115"/>
    </location>
</feature>
<feature type="topological domain" description="Cytoplasmic" evidence="1">
    <location>
        <begin position="116"/>
        <end position="135"/>
    </location>
</feature>
<feature type="transmembrane region" description="Helical; Name=4" evidence="1">
    <location>
        <begin position="136"/>
        <end position="160"/>
    </location>
</feature>
<feature type="topological domain" description="Extracellular" evidence="1">
    <location>
        <begin position="161"/>
        <end position="184"/>
    </location>
</feature>
<feature type="transmembrane region" description="Helical; Name=5" evidence="1">
    <location>
        <begin position="185"/>
        <end position="211"/>
    </location>
</feature>
<feature type="topological domain" description="Cytoplasmic" evidence="1">
    <location>
        <begin position="212"/>
        <end position="267"/>
    </location>
</feature>
<feature type="transmembrane region" description="Helical; Name=6" evidence="1">
    <location>
        <begin position="268"/>
        <end position="295"/>
    </location>
</feature>
<feature type="topological domain" description="Extracellular" evidence="1">
    <location>
        <begin position="296"/>
        <end position="312"/>
    </location>
</feature>
<feature type="transmembrane region" description="Helical; Name=7" evidence="1">
    <location>
        <begin position="313"/>
        <end position="332"/>
    </location>
</feature>
<feature type="topological domain" description="Cytoplasmic" evidence="1">
    <location>
        <begin position="333"/>
        <end position="488"/>
    </location>
</feature>
<feature type="region of interest" description="Disordered" evidence="3">
    <location>
        <begin position="356"/>
        <end position="376"/>
    </location>
</feature>
<feature type="region of interest" description="Disordered" evidence="3">
    <location>
        <begin position="437"/>
        <end position="475"/>
    </location>
</feature>
<feature type="compositionally biased region" description="Polar residues" evidence="3">
    <location>
        <begin position="361"/>
        <end position="376"/>
    </location>
</feature>
<feature type="compositionally biased region" description="Polar residues" evidence="3">
    <location>
        <begin position="437"/>
        <end position="449"/>
    </location>
</feature>
<feature type="modified residue" description="Phosphoserine" evidence="5">
    <location>
        <position position="374"/>
    </location>
</feature>
<feature type="modified residue" description="Phosphoserine" evidence="5">
    <location>
        <position position="377"/>
    </location>
</feature>
<feature type="modified residue" description="Phosphoserine" evidence="5">
    <location>
        <position position="379"/>
    </location>
</feature>
<feature type="modified residue" description="Phosphoserine" evidence="5">
    <location>
        <position position="382"/>
    </location>
</feature>
<feature type="glycosylation site" description="N-linked (GlcNAc...) asparagine" evidence="1">
    <location>
        <position position="7"/>
    </location>
</feature>
<feature type="disulfide bond" evidence="2">
    <location>
        <begin position="92"/>
        <end position="170"/>
    </location>
</feature>
<feature type="sequence conflict" description="In Ref. 2; AAA36438." evidence="7" ref="2">
    <original>GPA</original>
    <variation>WAC</variation>
    <location>
        <begin position="464"/>
        <end position="466"/>
    </location>
</feature>
<feature type="helix" evidence="9">
    <location>
        <begin position="23"/>
        <end position="44"/>
    </location>
</feature>
<feature type="helix" evidence="10">
    <location>
        <begin position="47"/>
        <end position="49"/>
    </location>
</feature>
<feature type="helix" evidence="9">
    <location>
        <begin position="53"/>
        <end position="81"/>
    </location>
</feature>
<feature type="strand" evidence="9">
    <location>
        <begin position="82"/>
        <end position="84"/>
    </location>
</feature>
<feature type="helix" evidence="9">
    <location>
        <begin position="92"/>
        <end position="112"/>
    </location>
</feature>
<feature type="turn" evidence="9">
    <location>
        <begin position="113"/>
        <end position="115"/>
    </location>
</feature>
<feature type="helix" evidence="9">
    <location>
        <begin position="116"/>
        <end position="122"/>
    </location>
</feature>
<feature type="helix" evidence="9">
    <location>
        <begin position="124"/>
        <end position="130"/>
    </location>
</feature>
<feature type="strand" evidence="9">
    <location>
        <begin position="132"/>
        <end position="134"/>
    </location>
</feature>
<feature type="helix" evidence="9">
    <location>
        <begin position="135"/>
        <end position="151"/>
    </location>
</feature>
<feature type="helix" evidence="9">
    <location>
        <begin position="153"/>
        <end position="156"/>
    </location>
</feature>
<feature type="strand" evidence="8">
    <location>
        <begin position="161"/>
        <end position="163"/>
    </location>
</feature>
<feature type="turn" evidence="8">
    <location>
        <begin position="165"/>
        <end position="167"/>
    </location>
</feature>
<feature type="strand" evidence="8">
    <location>
        <begin position="170"/>
        <end position="172"/>
    </location>
</feature>
<feature type="turn" evidence="9">
    <location>
        <begin position="179"/>
        <end position="181"/>
    </location>
</feature>
<feature type="helix" evidence="9">
    <location>
        <begin position="182"/>
        <end position="217"/>
    </location>
</feature>
<feature type="turn" evidence="9">
    <location>
        <begin position="267"/>
        <end position="269"/>
    </location>
</feature>
<feature type="helix" evidence="9">
    <location>
        <begin position="271"/>
        <end position="297"/>
    </location>
</feature>
<feature type="turn" evidence="9">
    <location>
        <begin position="306"/>
        <end position="308"/>
    </location>
</feature>
<feature type="helix" evidence="9">
    <location>
        <begin position="312"/>
        <end position="317"/>
    </location>
</feature>
<feature type="helix" evidence="9">
    <location>
        <begin position="320"/>
        <end position="323"/>
    </location>
</feature>
<feature type="turn" evidence="9">
    <location>
        <begin position="326"/>
        <end position="330"/>
    </location>
</feature>
<feature type="turn" evidence="9">
    <location>
        <begin position="335"/>
        <end position="337"/>
    </location>
</feature>
<name>PE2R4_HUMAN</name>
<reference key="1">
    <citation type="journal article" date="1994" name="J. Biol. Chem.">
        <title>Cloning, functional expression, and characterization of the human prostaglandin E2 receptor EP2 subtype.</title>
        <authorList>
            <person name="Bastien L."/>
            <person name="Sawyer N."/>
            <person name="Grygorczyk R."/>
            <person name="Metters K.M."/>
            <person name="Adam M."/>
        </authorList>
    </citation>
    <scope>NUCLEOTIDE SEQUENCE [MRNA]</scope>
    <source>
        <tissue>Lung</tissue>
    </source>
</reference>
<reference key="2">
    <citation type="journal article" date="1993" name="Biochem. Biophys. Res. Commun.">
        <title>Cloning and expression of the EP2 subtype of human receptors for prostaglandin E2.</title>
        <authorList>
            <person name="An S."/>
            <person name="Yang J."/>
            <person name="Xia M."/>
            <person name="Goetzl E.J."/>
        </authorList>
    </citation>
    <scope>NUCLEOTIDE SEQUENCE [MRNA]</scope>
    <source>
        <tissue>Lung</tissue>
    </source>
</reference>
<reference key="3">
    <citation type="journal article" date="1996" name="Genomics">
        <title>The structure of the prostaglandin EP4 receptor gene and related pseudogenes.</title>
        <authorList>
            <person name="Foord S.M."/>
            <person name="Marks B."/>
            <person name="Stolz M."/>
            <person name="Bufflier E."/>
            <person name="Fraser N.J."/>
            <person name="Lee M.G."/>
        </authorList>
    </citation>
    <scope>NUCLEOTIDE SEQUENCE [GENOMIC DNA]</scope>
</reference>
<reference key="4">
    <citation type="journal article" date="1996" name="J. Mol. Med.">
        <title>Gene expression of the human prostaglandin E receptor EP4 subtype: differential regulation in monocytoid and lymphoid lineage cells by phorbol ester.</title>
        <authorList>
            <person name="Mori K."/>
            <person name="Tanaka I."/>
            <person name="Kotani M."/>
            <person name="Miyaoka F."/>
            <person name="Sando T."/>
            <person name="Muro S."/>
            <person name="Sasaki Y."/>
            <person name="Nakagawa O."/>
            <person name="Ogawa Y."/>
            <person name="Usui T."/>
            <person name="Ozaki S."/>
            <person name="Ichikawa A."/>
            <person name="Narumiya S."/>
            <person name="Nakao K."/>
        </authorList>
    </citation>
    <scope>NUCLEOTIDE SEQUENCE [MRNA]</scope>
    <source>
        <tissue>Lung</tissue>
    </source>
</reference>
<reference key="5">
    <citation type="submission" date="2003-10" db="EMBL/GenBank/DDBJ databases">
        <title>cDNA clones of human proteins involved in signal transduction sequenced by the Guthrie cDNA resource center (www.cdna.org).</title>
        <authorList>
            <person name="Kopatz S.A."/>
            <person name="Aronstam R.S."/>
            <person name="Sharma S.V."/>
        </authorList>
    </citation>
    <scope>NUCLEOTIDE SEQUENCE [LARGE SCALE MRNA]</scope>
    <source>
        <tissue>Lung</tissue>
    </source>
</reference>
<reference key="6">
    <citation type="submission" date="2006-02" db="EMBL/GenBank/DDBJ databases">
        <authorList>
            <consortium name="SeattleSNPs variation discovery resource"/>
        </authorList>
    </citation>
    <scope>NUCLEOTIDE SEQUENCE [GENOMIC DNA]</scope>
</reference>
<reference key="7">
    <citation type="journal article" date="2004" name="Genome Res.">
        <title>The status, quality, and expansion of the NIH full-length cDNA project: the Mammalian Gene Collection (MGC).</title>
        <authorList>
            <consortium name="The MGC Project Team"/>
        </authorList>
    </citation>
    <scope>NUCLEOTIDE SEQUENCE [LARGE SCALE MRNA]</scope>
    <source>
        <tissue>Brain</tissue>
    </source>
</reference>
<reference key="8">
    <citation type="journal article" date="2001" name="Biochem. Pharmacol.">
        <title>Sequestration and phosphorylation of the prostaglandin E2 EP4 receptor: dependence on the C-terminal tail.</title>
        <authorList>
            <person name="Slipetz D."/>
            <person name="Buchanan S."/>
            <person name="Mackereth C."/>
            <person name="Brewer N."/>
            <person name="Pellow V."/>
            <person name="Hao C."/>
            <person name="Adam M."/>
            <person name="Abramovitz M."/>
            <person name="Metters K.M."/>
        </authorList>
    </citation>
    <scope>PHOSPHORYLATION</scope>
</reference>
<reference key="9">
    <citation type="journal article" date="2004" name="Biochem. J.">
        <title>Identification of a Ser/Thr cluster in the C-terminal domain of the human prostaglandin receptor EP4 that is essential for agonist-induced beta-arrestin1 recruitment but differs from the apparent principal phosphorylation site.</title>
        <authorList>
            <person name="Neuschafer-Rube F."/>
            <person name="Hermosilla R."/>
            <person name="Rehwald M."/>
            <person name="Ronnstrand L."/>
            <person name="Schulein R."/>
            <person name="Wernstedt C."/>
            <person name="Puschel G.P."/>
        </authorList>
    </citation>
    <scope>PHOSPHORYLATION AT SER-374; SER-377; SER-379 AND SER-382</scope>
</reference>
<reference key="10">
    <citation type="journal article" date="2006" name="Circ. Res.">
        <title>A novel prostaglandin E receptor 4-associated protein participates in antiinflammatory signaling.</title>
        <authorList>
            <person name="Takayama K."/>
            <person name="Sukhova G.K."/>
            <person name="Chin M.T."/>
            <person name="Libby P."/>
        </authorList>
    </citation>
    <scope>INTERACTION WITH FEM1A</scope>
</reference>
<comment type="function">
    <text>Receptor for prostaglandin E2 (PGE2). The activity of this receptor is mediated by G(s) proteins that stimulate adenylate cyclase. Has a relaxing effect on smooth muscle. May play an important role in regulating renal hemodynamics, intestinal epithelial transport, adrenal aldosterone secretion, and uterine function.</text>
</comment>
<comment type="subunit">
    <text evidence="6">Interacts with FEM1A.</text>
</comment>
<comment type="subcellular location">
    <subcellularLocation>
        <location>Cell membrane</location>
        <topology>Multi-pass membrane protein</topology>
    </subcellularLocation>
</comment>
<comment type="tissue specificity">
    <text>High in intestine and in peripheral blood mononuclear cells; low in lung, kidney, thymus, uterus, vasculature and brain. Not found in liver, heart, retina oe skeletal muscle.</text>
</comment>
<comment type="PTM">
    <text evidence="4 5">Phosphorylation mediates agonist-mediated desensitization by promoting cytoplasmic retention.</text>
</comment>
<comment type="similarity">
    <text evidence="2">Belongs to the G-protein coupled receptor 1 family.</text>
</comment>
<comment type="caution">
    <text evidence="7">Was originally designated as the EP2 subtype.</text>
</comment>
<evidence type="ECO:0000255" key="1"/>
<evidence type="ECO:0000255" key="2">
    <source>
        <dbReference type="PROSITE-ProRule" id="PRU00521"/>
    </source>
</evidence>
<evidence type="ECO:0000256" key="3">
    <source>
        <dbReference type="SAM" id="MobiDB-lite"/>
    </source>
</evidence>
<evidence type="ECO:0000269" key="4">
    <source>
    </source>
</evidence>
<evidence type="ECO:0000269" key="5">
    <source>
    </source>
</evidence>
<evidence type="ECO:0000269" key="6">
    <source>
    </source>
</evidence>
<evidence type="ECO:0000305" key="7"/>
<evidence type="ECO:0007829" key="8">
    <source>
        <dbReference type="PDB" id="5YWY"/>
    </source>
</evidence>
<evidence type="ECO:0007829" key="9">
    <source>
        <dbReference type="PDB" id="8GCP"/>
    </source>
</evidence>
<evidence type="ECO:0007829" key="10">
    <source>
        <dbReference type="PDB" id="8GDB"/>
    </source>
</evidence>
<gene>
    <name type="primary">PTGER4</name>
    <name type="synonym">PTGER2</name>
</gene>
<organism>
    <name type="scientific">Homo sapiens</name>
    <name type="common">Human</name>
    <dbReference type="NCBI Taxonomy" id="9606"/>
    <lineage>
        <taxon>Eukaryota</taxon>
        <taxon>Metazoa</taxon>
        <taxon>Chordata</taxon>
        <taxon>Craniata</taxon>
        <taxon>Vertebrata</taxon>
        <taxon>Euteleostomi</taxon>
        <taxon>Mammalia</taxon>
        <taxon>Eutheria</taxon>
        <taxon>Euarchontoglires</taxon>
        <taxon>Primates</taxon>
        <taxon>Haplorrhini</taxon>
        <taxon>Catarrhini</taxon>
        <taxon>Hominidae</taxon>
        <taxon>Homo</taxon>
    </lineage>
</organism>
<proteinExistence type="evidence at protein level"/>